<organism>
    <name type="scientific">Pseudomonas paraeruginosa (strain DSM 24068 / PA7)</name>
    <name type="common">Pseudomonas aeruginosa (strain PA7)</name>
    <dbReference type="NCBI Taxonomy" id="381754"/>
    <lineage>
        <taxon>Bacteria</taxon>
        <taxon>Pseudomonadati</taxon>
        <taxon>Pseudomonadota</taxon>
        <taxon>Gammaproteobacteria</taxon>
        <taxon>Pseudomonadales</taxon>
        <taxon>Pseudomonadaceae</taxon>
        <taxon>Pseudomonas</taxon>
        <taxon>Pseudomonas paraeruginosa</taxon>
    </lineage>
</organism>
<dbReference type="EMBL" id="CP000744">
    <property type="protein sequence ID" value="ABR83248.1"/>
    <property type="molecule type" value="Genomic_DNA"/>
</dbReference>
<dbReference type="RefSeq" id="WP_003111135.1">
    <property type="nucleotide sequence ID" value="NC_009656.1"/>
</dbReference>
<dbReference type="KEGG" id="pap:PSPA7_5214"/>
<dbReference type="HOGENOM" id="CLU_097887_1_1_6"/>
<dbReference type="Proteomes" id="UP000001582">
    <property type="component" value="Chromosome"/>
</dbReference>
<dbReference type="GO" id="GO:0005886">
    <property type="term" value="C:plasma membrane"/>
    <property type="evidence" value="ECO:0007669"/>
    <property type="project" value="UniProtKB-SubCell"/>
</dbReference>
<dbReference type="HAMAP" id="MF_00143">
    <property type="entry name" value="UPF0114"/>
    <property type="match status" value="1"/>
</dbReference>
<dbReference type="InterPro" id="IPR005134">
    <property type="entry name" value="UPF0114"/>
</dbReference>
<dbReference type="InterPro" id="IPR020761">
    <property type="entry name" value="UPF0114_bac"/>
</dbReference>
<dbReference type="NCBIfam" id="TIGR00645">
    <property type="entry name" value="HI0507"/>
    <property type="match status" value="1"/>
</dbReference>
<dbReference type="PANTHER" id="PTHR38596">
    <property type="entry name" value="UPF0114 PROTEIN YQHA"/>
    <property type="match status" value="1"/>
</dbReference>
<dbReference type="PANTHER" id="PTHR38596:SF1">
    <property type="entry name" value="UPF0114 PROTEIN YQHA"/>
    <property type="match status" value="1"/>
</dbReference>
<dbReference type="Pfam" id="PF03350">
    <property type="entry name" value="UPF0114"/>
    <property type="match status" value="1"/>
</dbReference>
<gene>
    <name type="ordered locus">PSPA7_5214</name>
</gene>
<sequence>MERFFENAMYASRWLLAPIYMGLSLALLALTIKFFQEIFHVIPNIFAMAEADLILVLLSLIDMALVGGLLVMVMISGYENFVSQLDIDEGKEKLNWLGKMDSGSLKNKVAASIVAISSIHLLRIFMDAKNVPDNKLMWYVIIHMTFVLSAFAMGYLDKQTRH</sequence>
<comment type="subcellular location">
    <subcellularLocation>
        <location evidence="1">Cell membrane</location>
        <topology evidence="1">Multi-pass membrane protein</topology>
    </subcellularLocation>
</comment>
<comment type="similarity">
    <text evidence="1">Belongs to the UPF0114 family.</text>
</comment>
<protein>
    <recommendedName>
        <fullName evidence="1">UPF0114 protein PSPA7_5214</fullName>
    </recommendedName>
</protein>
<feature type="chain" id="PRO_1000057939" description="UPF0114 protein PSPA7_5214">
    <location>
        <begin position="1"/>
        <end position="162"/>
    </location>
</feature>
<feature type="transmembrane region" description="Helical" evidence="1">
    <location>
        <begin position="15"/>
        <end position="35"/>
    </location>
</feature>
<feature type="transmembrane region" description="Helical" evidence="1">
    <location>
        <begin position="53"/>
        <end position="73"/>
    </location>
</feature>
<feature type="transmembrane region" description="Helical" evidence="1">
    <location>
        <begin position="136"/>
        <end position="156"/>
    </location>
</feature>
<reference key="1">
    <citation type="submission" date="2007-06" db="EMBL/GenBank/DDBJ databases">
        <authorList>
            <person name="Dodson R.J."/>
            <person name="Harkins D."/>
            <person name="Paulsen I.T."/>
        </authorList>
    </citation>
    <scope>NUCLEOTIDE SEQUENCE [LARGE SCALE GENOMIC DNA]</scope>
    <source>
        <strain>DSM 24068 / PA7</strain>
    </source>
</reference>
<name>Y5214_PSEP7</name>
<accession>A6VBW1</accession>
<keyword id="KW-1003">Cell membrane</keyword>
<keyword id="KW-0472">Membrane</keyword>
<keyword id="KW-0812">Transmembrane</keyword>
<keyword id="KW-1133">Transmembrane helix</keyword>
<evidence type="ECO:0000255" key="1">
    <source>
        <dbReference type="HAMAP-Rule" id="MF_00143"/>
    </source>
</evidence>
<proteinExistence type="inferred from homology"/>